<proteinExistence type="inferred from homology"/>
<reference key="1">
    <citation type="journal article" date="2003" name="J. Bacteriol.">
        <title>Complete genome sequence of the oral pathogenic bacterium Porphyromonas gingivalis strain W83.</title>
        <authorList>
            <person name="Nelson K.E."/>
            <person name="Fleischmann R.D."/>
            <person name="DeBoy R.T."/>
            <person name="Paulsen I.T."/>
            <person name="Fouts D.E."/>
            <person name="Eisen J.A."/>
            <person name="Daugherty S.C."/>
            <person name="Dodson R.J."/>
            <person name="Durkin A.S."/>
            <person name="Gwinn M.L."/>
            <person name="Haft D.H."/>
            <person name="Kolonay J.F."/>
            <person name="Nelson W.C."/>
            <person name="Mason T.M."/>
            <person name="Tallon L."/>
            <person name="Gray J."/>
            <person name="Granger D."/>
            <person name="Tettelin H."/>
            <person name="Dong H."/>
            <person name="Galvin J.L."/>
            <person name="Duncan M.J."/>
            <person name="Dewhirst F.E."/>
            <person name="Fraser C.M."/>
        </authorList>
    </citation>
    <scope>NUCLEOTIDE SEQUENCE [LARGE SCALE GENOMIC DNA]</scope>
    <source>
        <strain>ATCC BAA-308 / W83</strain>
    </source>
</reference>
<protein>
    <recommendedName>
        <fullName>Dihydroorotate dehydrogenase B (NAD(+)), catalytic subunit</fullName>
        <shortName>DHOD B</shortName>
        <shortName>DHODase B</shortName>
        <shortName>DHOdehase B</shortName>
        <ecNumber>1.3.1.14</ecNumber>
    </recommendedName>
    <alternativeName>
        <fullName>Dihydroorotate oxidase B</fullName>
    </alternativeName>
    <alternativeName>
        <fullName>Orotate reductase (NADH)</fullName>
    </alternativeName>
</protein>
<organism>
    <name type="scientific">Porphyromonas gingivalis (strain ATCC BAA-308 / W83)</name>
    <dbReference type="NCBI Taxonomy" id="242619"/>
    <lineage>
        <taxon>Bacteria</taxon>
        <taxon>Pseudomonadati</taxon>
        <taxon>Bacteroidota</taxon>
        <taxon>Bacteroidia</taxon>
        <taxon>Bacteroidales</taxon>
        <taxon>Porphyromonadaceae</taxon>
        <taxon>Porphyromonas</taxon>
    </lineage>
</organism>
<keyword id="KW-0963">Cytoplasm</keyword>
<keyword id="KW-0285">Flavoprotein</keyword>
<keyword id="KW-0288">FMN</keyword>
<keyword id="KW-0520">NAD</keyword>
<keyword id="KW-0560">Oxidoreductase</keyword>
<keyword id="KW-0665">Pyrimidine biosynthesis</keyword>
<keyword id="KW-1185">Reference proteome</keyword>
<sequence>MVRTEVEIGRGLTIKNPVMTASGTYGYGTEYKDFIDIDRLGAIVVKGTTLHHREGNAYPRMAETPSGMLNAVGLQNKGVHYFVEHIYPVIKDYRTEMIVNVSGSTLDDYAETSRIINELEHIRAIELNISCPNVKQGGMAYGVTCEGAASVVKAVRRAYDKTLIVKLSPNVTDITEIARAVESEGADAISMVNTFLGMAIDAEKRRPILSTTTGGLSGPCIKPIALRMVWQTAKVVQVPIIGMGGIASAADAIEFLLAGATAVQVGCYNFVDPAAASYIVDGIEDYLRRHGISDVKELIGSLVIEHN</sequence>
<name>PYRDB_PORGI</name>
<comment type="function">
    <text evidence="1">Catalyzes the conversion of dihydroorotate to orotate with NAD(+) as electron acceptor.</text>
</comment>
<comment type="catalytic activity">
    <reaction>
        <text>(S)-dihydroorotate + NAD(+) = orotate + NADH + H(+)</text>
        <dbReference type="Rhea" id="RHEA:13513"/>
        <dbReference type="ChEBI" id="CHEBI:15378"/>
        <dbReference type="ChEBI" id="CHEBI:30839"/>
        <dbReference type="ChEBI" id="CHEBI:30864"/>
        <dbReference type="ChEBI" id="CHEBI:57540"/>
        <dbReference type="ChEBI" id="CHEBI:57945"/>
        <dbReference type="EC" id="1.3.1.14"/>
    </reaction>
</comment>
<comment type="cofactor">
    <cofactor evidence="1">
        <name>FMN</name>
        <dbReference type="ChEBI" id="CHEBI:58210"/>
    </cofactor>
    <text evidence="1">Binds 1 FMN per subunit.</text>
</comment>
<comment type="pathway">
    <text>Pyrimidine metabolism; UMP biosynthesis via de novo pathway; orotate from (S)-dihydroorotate (NAD(+) route): step 1/1.</text>
</comment>
<comment type="subunit">
    <text evidence="1">Heterotetramer of 2 PyrK and 2 PyrD type B subunits.</text>
</comment>
<comment type="subcellular location">
    <subcellularLocation>
        <location evidence="1">Cytoplasm</location>
    </subcellularLocation>
</comment>
<comment type="similarity">
    <text evidence="2">Belongs to the dihydroorotate dehydrogenase family. Type 1 subfamily.</text>
</comment>
<feature type="chain" id="PRO_1000100225" description="Dihydroorotate dehydrogenase B (NAD(+)), catalytic subunit">
    <location>
        <begin position="1"/>
        <end position="307"/>
    </location>
</feature>
<feature type="active site" description="Nucleophile">
    <location>
        <position position="131"/>
    </location>
</feature>
<feature type="binding site" evidence="1">
    <location>
        <position position="22"/>
    </location>
    <ligand>
        <name>FMN</name>
        <dbReference type="ChEBI" id="CHEBI:58210"/>
    </ligand>
</feature>
<feature type="binding site" evidence="1">
    <location>
        <begin position="46"/>
        <end position="47"/>
    </location>
    <ligand>
        <name>FMN</name>
        <dbReference type="ChEBI" id="CHEBI:58210"/>
    </ligand>
</feature>
<feature type="binding site" evidence="1">
    <location>
        <position position="46"/>
    </location>
    <ligand>
        <name>substrate</name>
    </ligand>
</feature>
<feature type="binding site" evidence="1">
    <location>
        <begin position="70"/>
        <end position="74"/>
    </location>
    <ligand>
        <name>substrate</name>
    </ligand>
</feature>
<feature type="binding site" evidence="1">
    <location>
        <position position="100"/>
    </location>
    <ligand>
        <name>FMN</name>
        <dbReference type="ChEBI" id="CHEBI:58210"/>
    </ligand>
</feature>
<feature type="binding site" evidence="1">
    <location>
        <position position="128"/>
    </location>
    <ligand>
        <name>FMN</name>
        <dbReference type="ChEBI" id="CHEBI:58210"/>
    </ligand>
</feature>
<feature type="binding site" evidence="1">
    <location>
        <position position="128"/>
    </location>
    <ligand>
        <name>substrate</name>
    </ligand>
</feature>
<feature type="binding site" evidence="1">
    <location>
        <position position="166"/>
    </location>
    <ligand>
        <name>FMN</name>
        <dbReference type="ChEBI" id="CHEBI:58210"/>
    </ligand>
</feature>
<feature type="binding site" evidence="1">
    <location>
        <position position="192"/>
    </location>
    <ligand>
        <name>FMN</name>
        <dbReference type="ChEBI" id="CHEBI:58210"/>
    </ligand>
</feature>
<feature type="binding site" evidence="1">
    <location>
        <begin position="193"/>
        <end position="194"/>
    </location>
    <ligand>
        <name>substrate</name>
    </ligand>
</feature>
<feature type="binding site" evidence="1">
    <location>
        <position position="218"/>
    </location>
    <ligand>
        <name>FMN</name>
        <dbReference type="ChEBI" id="CHEBI:58210"/>
    </ligand>
</feature>
<feature type="binding site" evidence="1">
    <location>
        <begin position="244"/>
        <end position="245"/>
    </location>
    <ligand>
        <name>FMN</name>
        <dbReference type="ChEBI" id="CHEBI:58210"/>
    </ligand>
</feature>
<evidence type="ECO:0000250" key="1"/>
<evidence type="ECO:0000305" key="2"/>
<dbReference type="EC" id="1.3.1.14"/>
<dbReference type="EMBL" id="AE015924">
    <property type="protein sequence ID" value="AAQ66179.1"/>
    <property type="molecule type" value="Genomic_DNA"/>
</dbReference>
<dbReference type="RefSeq" id="WP_010956199.1">
    <property type="nucleotide sequence ID" value="NC_002950.2"/>
</dbReference>
<dbReference type="SMR" id="Q7MVJ6"/>
<dbReference type="STRING" id="242619.PG_1065"/>
<dbReference type="EnsemblBacteria" id="AAQ66179">
    <property type="protein sequence ID" value="AAQ66179"/>
    <property type="gene ID" value="PG_1065"/>
</dbReference>
<dbReference type="KEGG" id="pgi:PG_1065"/>
<dbReference type="PATRIC" id="fig|242619.8.peg.982"/>
<dbReference type="eggNOG" id="COG0167">
    <property type="taxonomic scope" value="Bacteria"/>
</dbReference>
<dbReference type="HOGENOM" id="CLU_042042_0_0_10"/>
<dbReference type="BioCyc" id="PGIN242619:G1G02-993-MONOMER"/>
<dbReference type="UniPathway" id="UPA00070">
    <property type="reaction ID" value="UER00945"/>
</dbReference>
<dbReference type="Proteomes" id="UP000000588">
    <property type="component" value="Chromosome"/>
</dbReference>
<dbReference type="GO" id="GO:0005737">
    <property type="term" value="C:cytoplasm"/>
    <property type="evidence" value="ECO:0007669"/>
    <property type="project" value="UniProtKB-SubCell"/>
</dbReference>
<dbReference type="GO" id="GO:0004589">
    <property type="term" value="F:dihydroorotate dehydrogenase (NAD+) activity"/>
    <property type="evidence" value="ECO:0007669"/>
    <property type="project" value="UniProtKB-EC"/>
</dbReference>
<dbReference type="GO" id="GO:0006207">
    <property type="term" value="P:'de novo' pyrimidine nucleobase biosynthetic process"/>
    <property type="evidence" value="ECO:0007669"/>
    <property type="project" value="InterPro"/>
</dbReference>
<dbReference type="GO" id="GO:0044205">
    <property type="term" value="P:'de novo' UMP biosynthetic process"/>
    <property type="evidence" value="ECO:0007669"/>
    <property type="project" value="UniProtKB-UniRule"/>
</dbReference>
<dbReference type="CDD" id="cd04740">
    <property type="entry name" value="DHOD_1B_like"/>
    <property type="match status" value="1"/>
</dbReference>
<dbReference type="FunFam" id="3.20.20.70:FF:000027">
    <property type="entry name" value="Dihydropyrimidine dehydrogenase [NADP(+)]"/>
    <property type="match status" value="1"/>
</dbReference>
<dbReference type="Gene3D" id="3.20.20.70">
    <property type="entry name" value="Aldolase class I"/>
    <property type="match status" value="1"/>
</dbReference>
<dbReference type="HAMAP" id="MF_00224">
    <property type="entry name" value="DHO_dh_type1"/>
    <property type="match status" value="1"/>
</dbReference>
<dbReference type="InterPro" id="IPR013785">
    <property type="entry name" value="Aldolase_TIM"/>
</dbReference>
<dbReference type="InterPro" id="IPR050074">
    <property type="entry name" value="DHO_dehydrogenase"/>
</dbReference>
<dbReference type="InterPro" id="IPR033888">
    <property type="entry name" value="DHOD_1B"/>
</dbReference>
<dbReference type="InterPro" id="IPR024920">
    <property type="entry name" value="Dihydroorotate_DH_1"/>
</dbReference>
<dbReference type="InterPro" id="IPR012135">
    <property type="entry name" value="Dihydroorotate_DH_1_2"/>
</dbReference>
<dbReference type="InterPro" id="IPR005720">
    <property type="entry name" value="Dihydroorotate_DH_cat"/>
</dbReference>
<dbReference type="InterPro" id="IPR001295">
    <property type="entry name" value="Dihydroorotate_DH_CS"/>
</dbReference>
<dbReference type="InterPro" id="IPR049622">
    <property type="entry name" value="Dihydroorotate_DH_I"/>
</dbReference>
<dbReference type="NCBIfam" id="NF005574">
    <property type="entry name" value="PRK07259.1"/>
    <property type="match status" value="1"/>
</dbReference>
<dbReference type="NCBIfam" id="TIGR01037">
    <property type="entry name" value="pyrD_sub1_fam"/>
    <property type="match status" value="1"/>
</dbReference>
<dbReference type="PANTHER" id="PTHR48109:SF1">
    <property type="entry name" value="DIHYDROOROTATE DEHYDROGENASE (FUMARATE)"/>
    <property type="match status" value="1"/>
</dbReference>
<dbReference type="PANTHER" id="PTHR48109">
    <property type="entry name" value="DIHYDROOROTATE DEHYDROGENASE (QUINONE), MITOCHONDRIAL-RELATED"/>
    <property type="match status" value="1"/>
</dbReference>
<dbReference type="Pfam" id="PF01180">
    <property type="entry name" value="DHO_dh"/>
    <property type="match status" value="1"/>
</dbReference>
<dbReference type="PIRSF" id="PIRSF000164">
    <property type="entry name" value="DHO_oxidase"/>
    <property type="match status" value="1"/>
</dbReference>
<dbReference type="SUPFAM" id="SSF51395">
    <property type="entry name" value="FMN-linked oxidoreductases"/>
    <property type="match status" value="1"/>
</dbReference>
<dbReference type="PROSITE" id="PS00911">
    <property type="entry name" value="DHODEHASE_1"/>
    <property type="match status" value="1"/>
</dbReference>
<dbReference type="PROSITE" id="PS00912">
    <property type="entry name" value="DHODEHASE_2"/>
    <property type="match status" value="1"/>
</dbReference>
<accession>Q7MVJ6</accession>
<gene>
    <name type="primary">pyrD</name>
    <name type="ordered locus">PG_1065</name>
</gene>